<reference key="1">
    <citation type="journal article" date="1993" name="Virus Res.">
        <title>Analysis of the nucleotide sequence of a 43 kbp segment of the genome of variola virus India-1967 strain.</title>
        <authorList>
            <person name="Shchelkunov S.N."/>
            <person name="Blinov V.M."/>
            <person name="Resenchuk S.M."/>
            <person name="Totmenin A.V."/>
            <person name="Sandakhchiev L.S."/>
        </authorList>
    </citation>
    <scope>NUCLEOTIDE SEQUENCE [GENOMIC DNA]</scope>
</reference>
<reference key="2">
    <citation type="journal article" date="1993" name="Virus Res.">
        <title>Nucleotide sequence analysis of variola virus HindIII M, L, I genome fragments.</title>
        <authorList>
            <person name="Shchelkunov S.N."/>
            <person name="Blinov V.M."/>
            <person name="Totmenin A.V."/>
            <person name="Marennikova S.S."/>
            <person name="Kolykhalov A.A."/>
            <person name="Frolov I.V."/>
            <person name="Chizhikov V.E."/>
            <person name="Gytorov V.V."/>
            <person name="Gashikov P.V."/>
            <person name="Belanov E.F."/>
            <person name="Belavin P.A."/>
            <person name="Resenchuk S.M."/>
            <person name="Andzhaparidze O.G."/>
            <person name="Sandakhchiev L.S."/>
        </authorList>
    </citation>
    <scope>NUCLEOTIDE SEQUENCE [GENOMIC DNA]</scope>
</reference>
<reference key="3">
    <citation type="journal article" date="1993" name="FEBS Lett.">
        <title>Genes of variola and vaccinia viruses necessary to overcome the host protective mechanisms.</title>
        <authorList>
            <person name="Shchelkunov S.N."/>
            <person name="Blinov V.M."/>
            <person name="Sandakhchiev L.S."/>
        </authorList>
    </citation>
    <scope>NUCLEOTIDE SEQUENCE [LARGE SCALE GENOMIC DNA]</scope>
</reference>
<dbReference type="EMBL" id="X67119">
    <property type="protein sequence ID" value="CAA47557.1"/>
    <property type="molecule type" value="Genomic_DNA"/>
</dbReference>
<dbReference type="EMBL" id="X69198">
    <property type="protein sequence ID" value="CAA48998.1"/>
    <property type="molecule type" value="Genomic_DNA"/>
</dbReference>
<dbReference type="PIR" id="A36843">
    <property type="entry name" value="A36843"/>
</dbReference>
<dbReference type="RefSeq" id="NP_042101.1">
    <property type="nucleotide sequence ID" value="NC_001611.1"/>
</dbReference>
<dbReference type="GeneID" id="1486458"/>
<dbReference type="KEGG" id="vg:1486458"/>
<dbReference type="Proteomes" id="UP000002060">
    <property type="component" value="Segment"/>
</dbReference>
<dbReference type="GO" id="GO:0030430">
    <property type="term" value="C:host cell cytoplasm"/>
    <property type="evidence" value="ECO:0007669"/>
    <property type="project" value="UniProtKB-SubCell"/>
</dbReference>
<dbReference type="GO" id="GO:0003697">
    <property type="term" value="F:single-stranded DNA binding"/>
    <property type="evidence" value="ECO:0007669"/>
    <property type="project" value="InterPro"/>
</dbReference>
<dbReference type="GO" id="GO:0030261">
    <property type="term" value="P:chromosome condensation"/>
    <property type="evidence" value="ECO:0007669"/>
    <property type="project" value="UniProtKB-KW"/>
</dbReference>
<dbReference type="InterPro" id="IPR006754">
    <property type="entry name" value="Poxvirus_I3_ssDNA-bd"/>
</dbReference>
<dbReference type="Pfam" id="PF04661">
    <property type="entry name" value="Pox_I3"/>
    <property type="match status" value="1"/>
</dbReference>
<dbReference type="PIRSF" id="PIRSF003767">
    <property type="entry name" value="VAC_I3L"/>
    <property type="match status" value="1"/>
</dbReference>
<accession>P0DOP3</accession>
<accession>P33000</accession>
<feature type="chain" id="PRO_0000099574" description="Protein OPG079">
    <location>
        <begin position="1"/>
        <end position="269"/>
    </location>
</feature>
<sequence length="269" mass="30049">MSKVIKKRVETSPRPTASSDSLQTCAGVIEYAKSISKSNAKCIEYVTLNASQYANCSSISIKLTDSLSSQMTSTFIMLEGETKLYKNKSKQDRSDGYFLKIKVTAASPMLYQLLEAVYGNIKHKERIPNSLHSLLVETITEKTFKDESIFINKLNGAMVEYVSTGELSILRSIEGELESLSKRERQLAKAIITPVVFYRSGTETKITFALKKLIIDREVVANVIGLSGDSERVSMTENVEEDLARNLGLVDIDDEYDEDSDKEKPIFNV</sequence>
<proteinExistence type="inferred from homology"/>
<protein>
    <recommendedName>
        <fullName>Protein OPG079</fullName>
    </recommendedName>
    <alternativeName>
        <fullName>Protein I3</fullName>
    </alternativeName>
</protein>
<organism>
    <name type="scientific">Variola virus (isolate Human/India/Ind3/1967)</name>
    <name type="common">VARV</name>
    <name type="synonym">Smallpox virus</name>
    <dbReference type="NCBI Taxonomy" id="587200"/>
    <lineage>
        <taxon>Viruses</taxon>
        <taxon>Varidnaviria</taxon>
        <taxon>Bamfordvirae</taxon>
        <taxon>Nucleocytoviricota</taxon>
        <taxon>Pokkesviricetes</taxon>
        <taxon>Chitovirales</taxon>
        <taxon>Poxviridae</taxon>
        <taxon>Chordopoxvirinae</taxon>
        <taxon>Orthopoxvirus</taxon>
        <taxon>Variola virus</taxon>
    </lineage>
</organism>
<organismHost>
    <name type="scientific">Homo sapiens</name>
    <name type="common">Human</name>
    <dbReference type="NCBI Taxonomy" id="9606"/>
</organismHost>
<keyword id="KW-0226">DNA condensation</keyword>
<keyword id="KW-0238">DNA-binding</keyword>
<keyword id="KW-0244">Early protein</keyword>
<keyword id="KW-1035">Host cytoplasm</keyword>
<keyword id="KW-1185">Reference proteome</keyword>
<evidence type="ECO:0000250" key="1">
    <source>
        <dbReference type="UniProtKB" id="P12923"/>
    </source>
</evidence>
<evidence type="ECO:0000305" key="2"/>
<name>PG079_VAR67</name>
<comment type="function">
    <text evidence="1">Plays an essential role in viral DNA replication. Binds to ssDNA with high affinity and localizes to cytoplasmic factories where nascent viral genomes accumulate. May disrupt loops, hairpins and other secondary structures present on ssDNA to reduce and eliminate pausing of viral DNA polymerase at specific sites during elongation.</text>
</comment>
<comment type="subunit">
    <text evidence="1">Homoomultimer (Potential). Interacts with the small subunit of ribonucleotide reductase (By similarity). Interacts with host FAM111A; this interaction protomtes OPG079 degradation through autophagy.</text>
</comment>
<comment type="subcellular location">
    <subcellularLocation>
        <location evidence="1">Host cytoplasm</location>
    </subcellularLocation>
    <text evidence="1">Localizes in cytoplasmic virus factories, where it is associated with viral DNA.</text>
</comment>
<comment type="induction">
    <text evidence="1">Expressed in the early phase of the viral replicative cycle.</text>
</comment>
<comment type="miscellaneous">
    <text>This protein is synthesized in the early as well as at the intermediate time of infection.</text>
</comment>
<comment type="similarity">
    <text evidence="2">Belongs to the orthopoxvirus OPG079 family.</text>
</comment>
<gene>
    <name type="primary">OPG079</name>
    <name type="ORF">I3L</name>
    <name type="ORF">K3L</name>
</gene>